<gene>
    <name evidence="1" type="primary">ymdB</name>
    <name type="ordered locus">b1045</name>
    <name type="ordered locus">JW1032</name>
</gene>
<dbReference type="EC" id="3.1.1.106" evidence="1 4 7"/>
<dbReference type="EMBL" id="U00096">
    <property type="protein sequence ID" value="AAC74129.1"/>
    <property type="molecule type" value="Genomic_DNA"/>
</dbReference>
<dbReference type="EMBL" id="AP009048">
    <property type="protein sequence ID" value="BAA35835.1"/>
    <property type="molecule type" value="Genomic_DNA"/>
</dbReference>
<dbReference type="PIR" id="B64847">
    <property type="entry name" value="B64847"/>
</dbReference>
<dbReference type="RefSeq" id="NP_415563.1">
    <property type="nucleotide sequence ID" value="NC_000913.3"/>
</dbReference>
<dbReference type="RefSeq" id="WP_000857405.1">
    <property type="nucleotide sequence ID" value="NZ_SSZK01000058.1"/>
</dbReference>
<dbReference type="PDB" id="1SPV">
    <property type="method" value="X-ray"/>
    <property type="resolution" value="2.00 A"/>
    <property type="chains" value="A=1-176"/>
</dbReference>
<dbReference type="PDB" id="5CB3">
    <property type="method" value="X-ray"/>
    <property type="resolution" value="1.80 A"/>
    <property type="chains" value="A=1-177"/>
</dbReference>
<dbReference type="PDB" id="5CB5">
    <property type="method" value="X-ray"/>
    <property type="resolution" value="2.80 A"/>
    <property type="chains" value="A/B/C/D/E/F/G/H/I/J/K/L/M/N/O/P/Q/R=1-177"/>
</dbReference>
<dbReference type="PDB" id="5CMS">
    <property type="method" value="X-ray"/>
    <property type="resolution" value="2.98 A"/>
    <property type="chains" value="A/B/C/D/E/F/G/H/I/J/K/L/M/N/O/P/Q/R=1-177"/>
</dbReference>
<dbReference type="PDBsum" id="1SPV"/>
<dbReference type="PDBsum" id="5CB3"/>
<dbReference type="PDBsum" id="5CB5"/>
<dbReference type="PDBsum" id="5CMS"/>
<dbReference type="SMR" id="P0A8D6"/>
<dbReference type="BioGRID" id="4260690">
    <property type="interactions" value="34"/>
</dbReference>
<dbReference type="DIP" id="DIP-48222N"/>
<dbReference type="FunCoup" id="P0A8D6">
    <property type="interactions" value="375"/>
</dbReference>
<dbReference type="IntAct" id="P0A8D6">
    <property type="interactions" value="3"/>
</dbReference>
<dbReference type="STRING" id="511145.b1045"/>
<dbReference type="DrugBank" id="DB03814">
    <property type="generic name" value="2-(N-morpholino)ethanesulfonic acid"/>
</dbReference>
<dbReference type="jPOST" id="P0A8D6"/>
<dbReference type="PaxDb" id="511145-b1045"/>
<dbReference type="EnsemblBacteria" id="AAC74129">
    <property type="protein sequence ID" value="AAC74129"/>
    <property type="gene ID" value="b1045"/>
</dbReference>
<dbReference type="GeneID" id="93776369"/>
<dbReference type="GeneID" id="946987"/>
<dbReference type="KEGG" id="ecj:JW1032"/>
<dbReference type="KEGG" id="eco:b1045"/>
<dbReference type="KEGG" id="ecoc:C3026_06360"/>
<dbReference type="PATRIC" id="fig|1411691.4.peg.1224"/>
<dbReference type="EchoBASE" id="EB3633"/>
<dbReference type="eggNOG" id="COG2110">
    <property type="taxonomic scope" value="Bacteria"/>
</dbReference>
<dbReference type="HOGENOM" id="CLU_046550_5_1_6"/>
<dbReference type="InParanoid" id="P0A8D6"/>
<dbReference type="OMA" id="AKWVIHT"/>
<dbReference type="OrthoDB" id="6194521at2"/>
<dbReference type="PhylomeDB" id="P0A8D6"/>
<dbReference type="BioCyc" id="EcoCyc:G6550-MONOMER"/>
<dbReference type="BioCyc" id="MetaCyc:G6550-MONOMER"/>
<dbReference type="BRENDA" id="3.1.1.106">
    <property type="organism ID" value="2026"/>
</dbReference>
<dbReference type="EvolutionaryTrace" id="P0A8D6"/>
<dbReference type="PRO" id="PR:P0A8D6"/>
<dbReference type="Proteomes" id="UP000000625">
    <property type="component" value="Chromosome"/>
</dbReference>
<dbReference type="GO" id="GO:0060698">
    <property type="term" value="F:endoribonuclease inhibitor activity"/>
    <property type="evidence" value="ECO:0000314"/>
    <property type="project" value="EcoCyc"/>
</dbReference>
<dbReference type="GO" id="GO:0019899">
    <property type="term" value="F:enzyme binding"/>
    <property type="evidence" value="ECO:0000353"/>
    <property type="project" value="EcoCyc"/>
</dbReference>
<dbReference type="GO" id="GO:0061463">
    <property type="term" value="F:O-acetyl-ADP-ribose deacetylase activity"/>
    <property type="evidence" value="ECO:0000314"/>
    <property type="project" value="EcoCyc"/>
</dbReference>
<dbReference type="GO" id="GO:0001883">
    <property type="term" value="F:purine nucleoside binding"/>
    <property type="evidence" value="ECO:0007669"/>
    <property type="project" value="UniProtKB-UniRule"/>
</dbReference>
<dbReference type="GO" id="GO:0042278">
    <property type="term" value="P:purine nucleoside metabolic process"/>
    <property type="evidence" value="ECO:0007669"/>
    <property type="project" value="UniProtKB-UniRule"/>
</dbReference>
<dbReference type="GO" id="GO:1900231">
    <property type="term" value="P:regulation of single-species biofilm formation on inanimate substrate"/>
    <property type="evidence" value="ECO:0000315"/>
    <property type="project" value="EcoCyc"/>
</dbReference>
<dbReference type="GO" id="GO:0046677">
    <property type="term" value="P:response to antibiotic"/>
    <property type="evidence" value="ECO:0000315"/>
    <property type="project" value="EcoCyc"/>
</dbReference>
<dbReference type="CDD" id="cd02908">
    <property type="entry name" value="Macro_OAADPr_deacetylase"/>
    <property type="match status" value="1"/>
</dbReference>
<dbReference type="FunFam" id="3.40.220.10:FF:000003">
    <property type="entry name" value="O-acetyl-ADP-ribose deacetylase MACROD2"/>
    <property type="match status" value="1"/>
</dbReference>
<dbReference type="Gene3D" id="3.40.220.10">
    <property type="entry name" value="Leucine Aminopeptidase, subunit E, domain 1"/>
    <property type="match status" value="1"/>
</dbReference>
<dbReference type="HAMAP" id="MF_01205">
    <property type="entry name" value="YmdB"/>
    <property type="match status" value="1"/>
</dbReference>
<dbReference type="InterPro" id="IPR002589">
    <property type="entry name" value="Macro_dom"/>
</dbReference>
<dbReference type="InterPro" id="IPR043472">
    <property type="entry name" value="Macro_dom-like"/>
</dbReference>
<dbReference type="InterPro" id="IPR024900">
    <property type="entry name" value="O-Ac-ADP-ribose_deAcase"/>
</dbReference>
<dbReference type="NCBIfam" id="NF001660">
    <property type="entry name" value="PRK00431.1-1"/>
    <property type="match status" value="1"/>
</dbReference>
<dbReference type="NCBIfam" id="NF001664">
    <property type="entry name" value="PRK00431.1-6"/>
    <property type="match status" value="1"/>
</dbReference>
<dbReference type="PANTHER" id="PTHR11106">
    <property type="entry name" value="GANGLIOSIDE INDUCED DIFFERENTIATION ASSOCIATED PROTEIN 2-RELATED"/>
    <property type="match status" value="1"/>
</dbReference>
<dbReference type="PANTHER" id="PTHR11106:SF27">
    <property type="entry name" value="MACRO DOMAIN-CONTAINING PROTEIN"/>
    <property type="match status" value="1"/>
</dbReference>
<dbReference type="Pfam" id="PF01661">
    <property type="entry name" value="Macro"/>
    <property type="match status" value="1"/>
</dbReference>
<dbReference type="SMART" id="SM00506">
    <property type="entry name" value="A1pp"/>
    <property type="match status" value="1"/>
</dbReference>
<dbReference type="SUPFAM" id="SSF52949">
    <property type="entry name" value="Macro domain-like"/>
    <property type="match status" value="1"/>
</dbReference>
<dbReference type="PROSITE" id="PS51154">
    <property type="entry name" value="MACRO"/>
    <property type="match status" value="1"/>
</dbReference>
<protein>
    <recommendedName>
        <fullName evidence="1 10">O-acetyl-ADP-ribose deacetylase</fullName>
        <ecNumber evidence="1 4 7">3.1.1.106</ecNumber>
    </recommendedName>
    <alternativeName>
        <fullName evidence="1 11">Regulator of RNase III activity</fullName>
    </alternativeName>
</protein>
<organism>
    <name type="scientific">Escherichia coli (strain K12)</name>
    <dbReference type="NCBI Taxonomy" id="83333"/>
    <lineage>
        <taxon>Bacteria</taxon>
        <taxon>Pseudomonadati</taxon>
        <taxon>Pseudomonadota</taxon>
        <taxon>Gammaproteobacteria</taxon>
        <taxon>Enterobacterales</taxon>
        <taxon>Enterobacteriaceae</taxon>
        <taxon>Escherichia</taxon>
    </lineage>
</organism>
<proteinExistence type="evidence at protein level"/>
<evidence type="ECO:0000255" key="1">
    <source>
        <dbReference type="HAMAP-Rule" id="MF_01205"/>
    </source>
</evidence>
<evidence type="ECO:0000255" key="2">
    <source>
        <dbReference type="PROSITE-ProRule" id="PRU00490"/>
    </source>
</evidence>
<evidence type="ECO:0000269" key="3">
    <source>
    </source>
</evidence>
<evidence type="ECO:0000269" key="4">
    <source>
    </source>
</evidence>
<evidence type="ECO:0000269" key="5">
    <source>
    </source>
</evidence>
<evidence type="ECO:0000269" key="6">
    <source>
    </source>
</evidence>
<evidence type="ECO:0000269" key="7">
    <source>
    </source>
</evidence>
<evidence type="ECO:0000269" key="8">
    <source>
    </source>
</evidence>
<evidence type="ECO:0000269" key="9">
    <source>
    </source>
</evidence>
<evidence type="ECO:0000303" key="10">
    <source>
    </source>
</evidence>
<evidence type="ECO:0000305" key="11"/>
<evidence type="ECO:0000305" key="12">
    <source>
    </source>
</evidence>
<evidence type="ECO:0007744" key="13">
    <source>
        <dbReference type="PDB" id="1SPV"/>
    </source>
</evidence>
<evidence type="ECO:0007744" key="14">
    <source>
        <dbReference type="PDB" id="5CB3"/>
    </source>
</evidence>
<evidence type="ECO:0007744" key="15">
    <source>
        <dbReference type="PDB" id="5CB5"/>
    </source>
</evidence>
<evidence type="ECO:0007744" key="16">
    <source>
        <dbReference type="PDB" id="5CMS"/>
    </source>
</evidence>
<evidence type="ECO:0007829" key="17">
    <source>
        <dbReference type="PDB" id="5CB3"/>
    </source>
</evidence>
<keyword id="KW-0002">3D-structure</keyword>
<keyword id="KW-0378">Hydrolase</keyword>
<keyword id="KW-1185">Reference proteome</keyword>
<keyword id="KW-0346">Stress response</keyword>
<comment type="function">
    <text evidence="3 4 5 7 8 9">Deacetylates O-acetyl-ADP ribose to yield ADP-ribose and free acetate (PubMed:21257746, PubMed:26481419). Down-regulates ribonuclease 3 (RNase III) activity. Acts by interacting directly with the region of the ribonuclease that is required for dimerization/activation (PubMed:19141481). Overexpression inhibits biofilm formation via an RNase III-independent pathway. This inhibition is RpoS-dependent (PubMed:24267348, PubMed:28582517). Overexpression also results in increased susceptibility to apramycin (PubMed:28034758, PubMed:28582517).</text>
</comment>
<comment type="catalytic activity">
    <reaction evidence="1 4 7">
        <text>3''-O-acetyl-ADP-D-ribose + H2O = ADP-D-ribose + acetate + H(+)</text>
        <dbReference type="Rhea" id="RHEA:59244"/>
        <dbReference type="ChEBI" id="CHEBI:15377"/>
        <dbReference type="ChEBI" id="CHEBI:15378"/>
        <dbReference type="ChEBI" id="CHEBI:30089"/>
        <dbReference type="ChEBI" id="CHEBI:57967"/>
        <dbReference type="ChEBI" id="CHEBI:142723"/>
        <dbReference type="EC" id="3.1.1.106"/>
    </reaction>
</comment>
<comment type="catalytic activity">
    <reaction evidence="1 4 7">
        <text>2''-O-acetyl-ADP-D-ribose + H2O = ADP-D-ribose + acetate + H(+)</text>
        <dbReference type="Rhea" id="RHEA:57060"/>
        <dbReference type="ChEBI" id="CHEBI:15377"/>
        <dbReference type="ChEBI" id="CHEBI:15378"/>
        <dbReference type="ChEBI" id="CHEBI:30089"/>
        <dbReference type="ChEBI" id="CHEBI:57967"/>
        <dbReference type="ChEBI" id="CHEBI:83767"/>
        <dbReference type="EC" id="3.1.1.106"/>
    </reaction>
</comment>
<comment type="biophysicochemical properties">
    <kinetics>
        <KM evidence="4">270 uM for O-acetyl-ADP-ribose</KM>
        <KM evidence="7">430 uM for O-acetyl-ADP-ribose</KM>
        <text evidence="4 7">kcat is 0.48 sec(-1) (PubMed:21257746). kcat is 1.31 sec(-1) (PubMed:26481419).</text>
    </kinetics>
</comment>
<comment type="subunit">
    <text evidence="3 6">Homodimer (PubMed:19141481). Interacts with RNase III (PubMed:19141481, PubMed:25546632). Interaction with the ribonuclease decreases homodimer formation (PubMed:19141481).</text>
</comment>
<comment type="induction">
    <text evidence="3 9">Expression is induced by both entry into stationary phase, via RpoS, and cold-shock stress.</text>
</comment>
<comment type="similarity">
    <text evidence="1 11">Belongs to the MacroD-type family. YmdB subfamily.</text>
</comment>
<accession>P0A8D6</accession>
<accession>P75918</accession>
<reference key="1">
    <citation type="journal article" date="1996" name="DNA Res.">
        <title>A 718-kb DNA sequence of the Escherichia coli K-12 genome corresponding to the 12.7-28.0 min region on the linkage map.</title>
        <authorList>
            <person name="Oshima T."/>
            <person name="Aiba H."/>
            <person name="Baba T."/>
            <person name="Fujita K."/>
            <person name="Hayashi K."/>
            <person name="Honjo A."/>
            <person name="Ikemoto K."/>
            <person name="Inada T."/>
            <person name="Itoh T."/>
            <person name="Kajihara M."/>
            <person name="Kanai K."/>
            <person name="Kashimoto K."/>
            <person name="Kimura S."/>
            <person name="Kitagawa M."/>
            <person name="Makino K."/>
            <person name="Masuda S."/>
            <person name="Miki T."/>
            <person name="Mizobuchi K."/>
            <person name="Mori H."/>
            <person name="Motomura K."/>
            <person name="Nakamura Y."/>
            <person name="Nashimoto H."/>
            <person name="Nishio Y."/>
            <person name="Saito N."/>
            <person name="Sampei G."/>
            <person name="Seki Y."/>
            <person name="Tagami H."/>
            <person name="Takemoto K."/>
            <person name="Wada C."/>
            <person name="Yamamoto Y."/>
            <person name="Yano M."/>
            <person name="Horiuchi T."/>
        </authorList>
    </citation>
    <scope>NUCLEOTIDE SEQUENCE [LARGE SCALE GENOMIC DNA]</scope>
    <source>
        <strain>K12 / W3110 / ATCC 27325 / DSM 5911</strain>
    </source>
</reference>
<reference key="2">
    <citation type="journal article" date="1997" name="Science">
        <title>The complete genome sequence of Escherichia coli K-12.</title>
        <authorList>
            <person name="Blattner F.R."/>
            <person name="Plunkett G. III"/>
            <person name="Bloch C.A."/>
            <person name="Perna N.T."/>
            <person name="Burland V."/>
            <person name="Riley M."/>
            <person name="Collado-Vides J."/>
            <person name="Glasner J.D."/>
            <person name="Rode C.K."/>
            <person name="Mayhew G.F."/>
            <person name="Gregor J."/>
            <person name="Davis N.W."/>
            <person name="Kirkpatrick H.A."/>
            <person name="Goeden M.A."/>
            <person name="Rose D.J."/>
            <person name="Mau B."/>
            <person name="Shao Y."/>
        </authorList>
    </citation>
    <scope>NUCLEOTIDE SEQUENCE [LARGE SCALE GENOMIC DNA]</scope>
    <source>
        <strain>K12 / MG1655 / ATCC 47076</strain>
    </source>
</reference>
<reference key="3">
    <citation type="journal article" date="2006" name="Mol. Syst. Biol.">
        <title>Highly accurate genome sequences of Escherichia coli K-12 strains MG1655 and W3110.</title>
        <authorList>
            <person name="Hayashi K."/>
            <person name="Morooka N."/>
            <person name="Yamamoto Y."/>
            <person name="Fujita K."/>
            <person name="Isono K."/>
            <person name="Choi S."/>
            <person name="Ohtsubo E."/>
            <person name="Baba T."/>
            <person name="Wanner B.L."/>
            <person name="Mori H."/>
            <person name="Horiuchi T."/>
        </authorList>
    </citation>
    <scope>NUCLEOTIDE SEQUENCE [LARGE SCALE GENOMIC DNA]</scope>
    <source>
        <strain>K12 / W3110 / ATCC 27325 / DSM 5911</strain>
    </source>
</reference>
<reference key="4">
    <citation type="journal article" date="2008" name="Genes Dev.">
        <title>YmdB: a stress-responsive ribonuclease-binding regulator of E. coli RNase III activity.</title>
        <authorList>
            <person name="Kim K.S."/>
            <person name="Manasherob R."/>
            <person name="Cohen S.N."/>
        </authorList>
    </citation>
    <scope>FUNCTION</scope>
    <scope>SUBUNIT</scope>
    <scope>INTERACTION WITH RIBONUCLEASE 3</scope>
    <scope>INDUCTION</scope>
</reference>
<reference key="5">
    <citation type="journal article" date="2011" name="J. Biol. Chem.">
        <title>Identification of macrodomain proteins as novel O-acetyl-ADP-ribose deacetylases.</title>
        <authorList>
            <person name="Chen D."/>
            <person name="Vollmar M."/>
            <person name="Rossi M.N."/>
            <person name="Phillips C."/>
            <person name="Kraehenbuehl R."/>
            <person name="Slade D."/>
            <person name="Mehrotra P.V."/>
            <person name="von Delft F."/>
            <person name="Crosthwaite S.K."/>
            <person name="Gileadi O."/>
            <person name="Denu J.M."/>
            <person name="Ahel I."/>
        </authorList>
    </citation>
    <scope>FUNCTION</scope>
    <scope>CATALYTIC ACTIVITY</scope>
    <scope>BIOPHYSICOCHEMICAL PROPERTIES</scope>
    <scope>MUTAGENESIS OF GLY-124</scope>
</reference>
<reference key="6">
    <citation type="journal article" date="2013" name="BMC Microbiol.">
        <title>Escherichia coli YmdB regulates biofilm formation independently of its role as an RNase III modulator.</title>
        <authorList>
            <person name="Kim T."/>
            <person name="Lee J."/>
            <person name="Kim K.S."/>
        </authorList>
    </citation>
    <scope>FUNCTION</scope>
</reference>
<reference key="7">
    <citation type="journal article" date="2015" name="Proteins">
        <title>Combined computational and experimental analysis of a complex of ribonuclease III and the regulatory macrodomain protein, YmdB.</title>
        <authorList>
            <person name="Paudyal S."/>
            <person name="Alfonso-Prieto M."/>
            <person name="Carnevale V."/>
            <person name="Redhu S.K."/>
            <person name="Klein M.L."/>
            <person name="Nicholson A.W."/>
        </authorList>
    </citation>
    <scope>INTERACTION WITH RNASE III</scope>
    <scope>MUTAGENESIS OF ARG-40</scope>
</reference>
<reference key="8">
    <citation type="journal article" date="2017" name="Biochem. Biophys. Res. Commun.">
        <title>YmdB-mediated down-regulation of sucA inhibits biofilm formation and induces apramycin susceptibility in Escherichia coli.</title>
        <authorList>
            <person name="Kim M."/>
            <person name="Kim M."/>
            <person name="Kim K.S."/>
        </authorList>
    </citation>
    <scope>FUNCTION</scope>
</reference>
<reference key="9">
    <citation type="journal article" date="2017" name="FEMS Microbiol. Lett.">
        <title>Stress-responsively modulated ymdAB-clsC operon plays a role in biofilm formation and apramycin susceptibility in Escherichia coli.</title>
        <authorList>
            <person name="Kim M."/>
            <person name="Kim K.S."/>
        </authorList>
    </citation>
    <scope>FUNCTION</scope>
    <scope>INDUCTION</scope>
</reference>
<reference evidence="13" key="10">
    <citation type="submission" date="2005-01" db="PDB data bank">
        <title>Crystal structure of the putative phosphatase of Escherichia coli, northeast structural genomics target ER58.</title>
        <authorList>
            <consortium name="Northeast structural genomics consortium (NESG)"/>
        </authorList>
    </citation>
    <scope>X-RAY CRYSTALLOGRAPHY (2.00 ANGSTROMS) OF 1-176</scope>
</reference>
<reference evidence="14 15 16" key="11">
    <citation type="journal article" date="2015" name="J. Struct. Biol.">
        <title>Structural insights into the mechanism of Escherichia coli YmdB: A 2'-O-acetyl-ADP-ribose deacetylase.</title>
        <authorList>
            <person name="Zhang W."/>
            <person name="Wang C."/>
            <person name="Song Y."/>
            <person name="Shao C."/>
            <person name="Zhang X."/>
            <person name="Zang J."/>
        </authorList>
    </citation>
    <scope>X-RAY CRYSTALLOGRAPHY (1.80 ANGSTROMS) OF WILD-TYPE AND MUTANTS ALA-25/ALA-35 AND ALA-126 IN COMPLEXES WITH ADP-RIBOSE</scope>
    <scope>FUNCTION</scope>
    <scope>CATALYTIC ACTIVITY</scope>
    <scope>BIOPHYSICOCHEMICAL PROPERTIES</scope>
    <scope>ACTIVE SITE</scope>
    <scope>MUTAGENESIS OF ASN-25; ASP-35 AND TYR-126</scope>
</reference>
<sequence>MKTRIHVVQGDITKLAVDVIVNAANPSLMGGGGVDGAIHRAAGPALLDACLKVRQQQGDCPTGHAVITLAGDLPAKAVVHTVGPVWRGGEQNEDQLLQDAYLNSLRLVAANSYTSVAFPAISTGVYGYPRAAAAEIAVKTVSEFITRHALPEQVYFVCYDEENAHLYERLLTQQGDE</sequence>
<feature type="chain" id="PRO_0000089191" description="O-acetyl-ADP-ribose deacetylase">
    <location>
        <begin position="1"/>
        <end position="177"/>
    </location>
</feature>
<feature type="domain" description="Macro" evidence="1 2">
    <location>
        <begin position="1"/>
        <end position="175"/>
    </location>
</feature>
<feature type="active site" description="Proton acceptor" evidence="1 12">
    <location>
        <position position="35"/>
    </location>
</feature>
<feature type="binding site" evidence="1 7">
    <location>
        <begin position="11"/>
        <end position="12"/>
    </location>
    <ligand>
        <name>substrate</name>
    </ligand>
</feature>
<feature type="binding site" evidence="1 7">
    <location>
        <position position="25"/>
    </location>
    <ligand>
        <name>substrate</name>
    </ligand>
</feature>
<feature type="binding site" evidence="1 7">
    <location>
        <begin position="33"/>
        <end position="35"/>
    </location>
    <ligand>
        <name>substrate</name>
    </ligand>
</feature>
<feature type="binding site" evidence="1 7">
    <location>
        <begin position="122"/>
        <end position="126"/>
    </location>
    <ligand>
        <name>substrate</name>
    </ligand>
</feature>
<feature type="mutagenesis site" description="5-fold decrease in catalytic efficiency. Loss of activity; when associated with A-35." evidence="7">
    <original>N</original>
    <variation>A</variation>
    <location>
        <position position="25"/>
    </location>
</feature>
<feature type="mutagenesis site" description="41-fold decrease in catalytic efficiency. Loss of activity; when associated with A-25." evidence="7">
    <original>D</original>
    <variation>A</variation>
    <location>
        <position position="35"/>
    </location>
</feature>
<feature type="mutagenesis site" description="Causes a 17-fold increase in the dissociation constant of the YmdB-RNase III interaction." evidence="6">
    <original>R</original>
    <variation>A</variation>
    <location>
        <position position="40"/>
    </location>
</feature>
<feature type="mutagenesis site" description="Abolishes enzyme activity." evidence="4">
    <original>G</original>
    <variation>E</variation>
    <location>
        <position position="124"/>
    </location>
</feature>
<feature type="mutagenesis site" description="Loss of activity." evidence="7">
    <original>Y</original>
    <variation>A</variation>
    <location>
        <position position="126"/>
    </location>
</feature>
<feature type="mutagenesis site" description="No change in activity." evidence="7">
    <original>Y</original>
    <variation>F</variation>
    <location>
        <position position="126"/>
    </location>
</feature>
<feature type="strand" evidence="17">
    <location>
        <begin position="5"/>
        <end position="10"/>
    </location>
</feature>
<feature type="helix" evidence="17">
    <location>
        <begin position="12"/>
        <end position="14"/>
    </location>
</feature>
<feature type="strand" evidence="17">
    <location>
        <begin position="18"/>
        <end position="23"/>
    </location>
</feature>
<feature type="helix" evidence="17">
    <location>
        <begin position="34"/>
        <end position="42"/>
    </location>
</feature>
<feature type="helix" evidence="17">
    <location>
        <begin position="44"/>
        <end position="57"/>
    </location>
</feature>
<feature type="strand" evidence="17">
    <location>
        <begin position="65"/>
        <end position="69"/>
    </location>
</feature>
<feature type="strand" evidence="17">
    <location>
        <begin position="73"/>
        <end position="81"/>
    </location>
</feature>
<feature type="strand" evidence="17">
    <location>
        <begin position="87"/>
        <end position="92"/>
    </location>
</feature>
<feature type="helix" evidence="17">
    <location>
        <begin position="93"/>
        <end position="110"/>
    </location>
</feature>
<feature type="strand" evidence="17">
    <location>
        <begin position="115"/>
        <end position="118"/>
    </location>
</feature>
<feature type="helix" evidence="17">
    <location>
        <begin position="130"/>
        <end position="147"/>
    </location>
</feature>
<feature type="strand" evidence="17">
    <location>
        <begin position="149"/>
        <end position="160"/>
    </location>
</feature>
<feature type="helix" evidence="17">
    <location>
        <begin position="161"/>
        <end position="171"/>
    </location>
</feature>
<name>YMDB_ECOLI</name>